<dbReference type="EMBL" id="CP001612">
    <property type="protein sequence ID" value="ACP53340.1"/>
    <property type="molecule type" value="Genomic_DNA"/>
</dbReference>
<dbReference type="RefSeq" id="WP_012719579.1">
    <property type="nucleotide sequence ID" value="NC_012633.1"/>
</dbReference>
<dbReference type="SMR" id="C3PN30"/>
<dbReference type="KEGG" id="raf:RAF_ORF0403"/>
<dbReference type="HOGENOM" id="CLU_033123_0_0_5"/>
<dbReference type="Proteomes" id="UP000002305">
    <property type="component" value="Chromosome"/>
</dbReference>
<dbReference type="GO" id="GO:0009376">
    <property type="term" value="C:HslUV protease complex"/>
    <property type="evidence" value="ECO:0007669"/>
    <property type="project" value="UniProtKB-UniRule"/>
</dbReference>
<dbReference type="GO" id="GO:0005524">
    <property type="term" value="F:ATP binding"/>
    <property type="evidence" value="ECO:0007669"/>
    <property type="project" value="UniProtKB-UniRule"/>
</dbReference>
<dbReference type="GO" id="GO:0016887">
    <property type="term" value="F:ATP hydrolysis activity"/>
    <property type="evidence" value="ECO:0007669"/>
    <property type="project" value="InterPro"/>
</dbReference>
<dbReference type="GO" id="GO:0003677">
    <property type="term" value="F:DNA binding"/>
    <property type="evidence" value="ECO:0007669"/>
    <property type="project" value="InterPro"/>
</dbReference>
<dbReference type="GO" id="GO:0008233">
    <property type="term" value="F:peptidase activity"/>
    <property type="evidence" value="ECO:0007669"/>
    <property type="project" value="InterPro"/>
</dbReference>
<dbReference type="GO" id="GO:0036402">
    <property type="term" value="F:proteasome-activating activity"/>
    <property type="evidence" value="ECO:0007669"/>
    <property type="project" value="UniProtKB-UniRule"/>
</dbReference>
<dbReference type="GO" id="GO:0043335">
    <property type="term" value="P:protein unfolding"/>
    <property type="evidence" value="ECO:0007669"/>
    <property type="project" value="UniProtKB-UniRule"/>
</dbReference>
<dbReference type="GO" id="GO:0051603">
    <property type="term" value="P:proteolysis involved in protein catabolic process"/>
    <property type="evidence" value="ECO:0007669"/>
    <property type="project" value="TreeGrafter"/>
</dbReference>
<dbReference type="CDD" id="cd19498">
    <property type="entry name" value="RecA-like_HslU"/>
    <property type="match status" value="1"/>
</dbReference>
<dbReference type="FunFam" id="3.40.50.300:FF:000213">
    <property type="entry name" value="ATP-dependent protease ATPase subunit HslU"/>
    <property type="match status" value="1"/>
</dbReference>
<dbReference type="Gene3D" id="1.10.8.60">
    <property type="match status" value="1"/>
</dbReference>
<dbReference type="Gene3D" id="3.40.50.300">
    <property type="entry name" value="P-loop containing nucleotide triphosphate hydrolases"/>
    <property type="match status" value="2"/>
</dbReference>
<dbReference type="HAMAP" id="MF_00249">
    <property type="entry name" value="HslU"/>
    <property type="match status" value="1"/>
</dbReference>
<dbReference type="InterPro" id="IPR003593">
    <property type="entry name" value="AAA+_ATPase"/>
</dbReference>
<dbReference type="InterPro" id="IPR050052">
    <property type="entry name" value="ATP-dep_Clp_protease_ClpX"/>
</dbReference>
<dbReference type="InterPro" id="IPR003959">
    <property type="entry name" value="ATPase_AAA_core"/>
</dbReference>
<dbReference type="InterPro" id="IPR019489">
    <property type="entry name" value="Clp_ATPase_C"/>
</dbReference>
<dbReference type="InterPro" id="IPR004491">
    <property type="entry name" value="HslU"/>
</dbReference>
<dbReference type="InterPro" id="IPR001208">
    <property type="entry name" value="MCM_dom"/>
</dbReference>
<dbReference type="InterPro" id="IPR027417">
    <property type="entry name" value="P-loop_NTPase"/>
</dbReference>
<dbReference type="NCBIfam" id="TIGR00390">
    <property type="entry name" value="hslU"/>
    <property type="match status" value="1"/>
</dbReference>
<dbReference type="NCBIfam" id="NF003544">
    <property type="entry name" value="PRK05201.1"/>
    <property type="match status" value="1"/>
</dbReference>
<dbReference type="PANTHER" id="PTHR48102">
    <property type="entry name" value="ATP-DEPENDENT CLP PROTEASE ATP-BINDING SUBUNIT CLPX-LIKE, MITOCHONDRIAL-RELATED"/>
    <property type="match status" value="1"/>
</dbReference>
<dbReference type="PANTHER" id="PTHR48102:SF3">
    <property type="entry name" value="ATP-DEPENDENT PROTEASE ATPASE SUBUNIT HSLU"/>
    <property type="match status" value="1"/>
</dbReference>
<dbReference type="Pfam" id="PF07724">
    <property type="entry name" value="AAA_2"/>
    <property type="match status" value="1"/>
</dbReference>
<dbReference type="Pfam" id="PF00493">
    <property type="entry name" value="MCM"/>
    <property type="match status" value="1"/>
</dbReference>
<dbReference type="SMART" id="SM00382">
    <property type="entry name" value="AAA"/>
    <property type="match status" value="1"/>
</dbReference>
<dbReference type="SMART" id="SM01086">
    <property type="entry name" value="ClpB_D2-small"/>
    <property type="match status" value="1"/>
</dbReference>
<dbReference type="SUPFAM" id="SSF52540">
    <property type="entry name" value="P-loop containing nucleoside triphosphate hydrolases"/>
    <property type="match status" value="1"/>
</dbReference>
<sequence length="450" mass="49553">MKATKTTYKKDPMGLTPSQIVNELNRFIVGQEKAKKAVAIALRNRCRRKRVEGNLRNEIVPKNILMIGSTGVGKTEIARRLAKLTNSPFYKIEATKFTEVGYVGRDVESIIRDLVEIAVNTEKTLAKTKVDIHAREKAIERILDSLVGKTSSSETREKFKEKILNGELDDKEIEISVADTTPVGGGSFEIPGMPGASMGVLNLGDMIGRALGSSKTKTKKMLVKDAMAIIIPEESEKLIDQEKIIQQAINLAENDGIVFIDEIDKIASTGSSGAKNAAISREGVQRDLLPLIEGTTVNTKYGPVKTDHILFIASGAFHIAKPSDLLPELQGRLPIRVELNSLTKDDMIKILLEPETSLIKQYSALIGTEDVRLEFAASAIEKIADYAITVNLEVEDIGARRLHTILENLLEDISFEASEMKGKKITIDDKFVENQLSKIITNLDLAKFVL</sequence>
<comment type="function">
    <text evidence="1">ATPase subunit of a proteasome-like degradation complex; this subunit has chaperone activity. The binding of ATP and its subsequent hydrolysis by HslU are essential for unfolding of protein substrates subsequently hydrolyzed by HslV. HslU recognizes the N-terminal part of its protein substrates and unfolds these before they are guided to HslV for hydrolysis.</text>
</comment>
<comment type="subunit">
    <text evidence="1">A double ring-shaped homohexamer of HslV is capped on each side by a ring-shaped HslU homohexamer. The assembly of the HslU/HslV complex is dependent on binding of ATP.</text>
</comment>
<comment type="subcellular location">
    <subcellularLocation>
        <location evidence="1">Cytoplasm</location>
    </subcellularLocation>
</comment>
<comment type="similarity">
    <text evidence="1">Belongs to the ClpX chaperone family. HslU subfamily.</text>
</comment>
<proteinExistence type="inferred from homology"/>
<feature type="chain" id="PRO_1000204528" description="ATP-dependent protease ATPase subunit HslU">
    <location>
        <begin position="1"/>
        <end position="450"/>
    </location>
</feature>
<feature type="binding site" evidence="1">
    <location>
        <position position="29"/>
    </location>
    <ligand>
        <name>ATP</name>
        <dbReference type="ChEBI" id="CHEBI:30616"/>
    </ligand>
</feature>
<feature type="binding site" evidence="1">
    <location>
        <begin position="71"/>
        <end position="76"/>
    </location>
    <ligand>
        <name>ATP</name>
        <dbReference type="ChEBI" id="CHEBI:30616"/>
    </ligand>
</feature>
<feature type="binding site" evidence="1">
    <location>
        <position position="261"/>
    </location>
    <ligand>
        <name>ATP</name>
        <dbReference type="ChEBI" id="CHEBI:30616"/>
    </ligand>
</feature>
<feature type="binding site" evidence="1">
    <location>
        <position position="328"/>
    </location>
    <ligand>
        <name>ATP</name>
        <dbReference type="ChEBI" id="CHEBI:30616"/>
    </ligand>
</feature>
<feature type="binding site" evidence="1">
    <location>
        <position position="400"/>
    </location>
    <ligand>
        <name>ATP</name>
        <dbReference type="ChEBI" id="CHEBI:30616"/>
    </ligand>
</feature>
<evidence type="ECO:0000255" key="1">
    <source>
        <dbReference type="HAMAP-Rule" id="MF_00249"/>
    </source>
</evidence>
<gene>
    <name evidence="1" type="primary">hslU</name>
    <name type="ordered locus">RAF_ORF0403</name>
</gene>
<organism>
    <name type="scientific">Rickettsia africae (strain ESF-5)</name>
    <dbReference type="NCBI Taxonomy" id="347255"/>
    <lineage>
        <taxon>Bacteria</taxon>
        <taxon>Pseudomonadati</taxon>
        <taxon>Pseudomonadota</taxon>
        <taxon>Alphaproteobacteria</taxon>
        <taxon>Rickettsiales</taxon>
        <taxon>Rickettsiaceae</taxon>
        <taxon>Rickettsieae</taxon>
        <taxon>Rickettsia</taxon>
        <taxon>spotted fever group</taxon>
    </lineage>
</organism>
<keyword id="KW-0067">ATP-binding</keyword>
<keyword id="KW-0143">Chaperone</keyword>
<keyword id="KW-0963">Cytoplasm</keyword>
<keyword id="KW-0547">Nucleotide-binding</keyword>
<keyword id="KW-0346">Stress response</keyword>
<reference key="1">
    <citation type="journal article" date="2009" name="BMC Genomics">
        <title>Analysis of the Rickettsia africae genome reveals that virulence acquisition in Rickettsia species may be explained by genome reduction.</title>
        <authorList>
            <person name="Fournier P.-E."/>
            <person name="El Karkouri K."/>
            <person name="Leroy Q."/>
            <person name="Robert C."/>
            <person name="Giumelli B."/>
            <person name="Renesto P."/>
            <person name="Socolovschi C."/>
            <person name="Parola P."/>
            <person name="Audic S."/>
            <person name="Raoult D."/>
        </authorList>
    </citation>
    <scope>NUCLEOTIDE SEQUENCE [LARGE SCALE GENOMIC DNA]</scope>
    <source>
        <strain>ESF-5</strain>
    </source>
</reference>
<protein>
    <recommendedName>
        <fullName evidence="1">ATP-dependent protease ATPase subunit HslU</fullName>
    </recommendedName>
    <alternativeName>
        <fullName evidence="1">Unfoldase HslU</fullName>
    </alternativeName>
</protein>
<name>HSLU_RICAE</name>
<accession>C3PN30</accession>